<organism>
    <name type="scientific">Saccharomyces cerevisiae (strain ATCC 204508 / S288c)</name>
    <name type="common">Baker's yeast</name>
    <dbReference type="NCBI Taxonomy" id="559292"/>
    <lineage>
        <taxon>Eukaryota</taxon>
        <taxon>Fungi</taxon>
        <taxon>Dikarya</taxon>
        <taxon>Ascomycota</taxon>
        <taxon>Saccharomycotina</taxon>
        <taxon>Saccharomycetes</taxon>
        <taxon>Saccharomycetales</taxon>
        <taxon>Saccharomycetaceae</taxon>
        <taxon>Saccharomyces</taxon>
    </lineage>
</organism>
<evidence type="ECO:0000255" key="1"/>
<evidence type="ECO:0000255" key="2">
    <source>
        <dbReference type="PROSITE-ProRule" id="PRU10037"/>
    </source>
</evidence>
<evidence type="ECO:0000269" key="3">
    <source>
    </source>
</evidence>
<evidence type="ECO:0000269" key="4">
    <source>
    </source>
</evidence>
<evidence type="ECO:0000269" key="5">
    <source>
    </source>
</evidence>
<evidence type="ECO:0000305" key="6"/>
<evidence type="ECO:0000305" key="7">
    <source>
    </source>
</evidence>
<keyword id="KW-0325">Glycoprotein</keyword>
<keyword id="KW-0378">Hydrolase</keyword>
<keyword id="KW-0551">Lipid droplet</keyword>
<keyword id="KW-0472">Membrane</keyword>
<keyword id="KW-1185">Reference proteome</keyword>
<comment type="function">
    <text evidence="5">Shows both triacylglycerol (TAG) lipase and ester hydrolase activities. May play a role in TAG homeostasis.</text>
</comment>
<comment type="catalytic activity">
    <reaction evidence="5">
        <text>a triacylglycerol + H2O = a diacylglycerol + a fatty acid + H(+)</text>
        <dbReference type="Rhea" id="RHEA:12044"/>
        <dbReference type="ChEBI" id="CHEBI:15377"/>
        <dbReference type="ChEBI" id="CHEBI:15378"/>
        <dbReference type="ChEBI" id="CHEBI:17855"/>
        <dbReference type="ChEBI" id="CHEBI:18035"/>
        <dbReference type="ChEBI" id="CHEBI:28868"/>
        <dbReference type="EC" id="3.1.1.3"/>
    </reaction>
</comment>
<comment type="biophysicochemical properties">
    <kinetics>
        <KM evidence="5">12.07 mM for p-nitrophenyl acetate</KM>
        <KM evidence="5">14.79 mM for p-nitrophenyl butyrate</KM>
        <text evidence="5">kcat is 0.87 sec(-1) with p-nitrophenyl acetat as substrate and 0.44 sec(-1) with p-nitrophenyl butyrate as substrate.</text>
    </kinetics>
    <phDependence>
        <text evidence="5">Optimum pH is 7.5.</text>
    </phDependence>
    <temperatureDependence>
        <text evidence="5">Optimum temperature is 30X degrees Celsius.</text>
    </temperatureDependence>
</comment>
<comment type="subcellular location">
    <subcellularLocation>
        <location evidence="4">Lipid droplet</location>
    </subcellularLocation>
    <subcellularLocation>
        <location evidence="1">Membrane</location>
        <topology evidence="1">Peripheral membrane protein</topology>
    </subcellularLocation>
</comment>
<comment type="disruption phenotype">
    <text evidence="5">Accumulates lipid droplets.</text>
</comment>
<comment type="miscellaneous">
    <text evidence="3">Present with 2190 molecules/cell in log phase SD medium.</text>
</comment>
<comment type="similarity">
    <text evidence="6">Belongs to the AB hydrolase superfamily. LDAH family.</text>
</comment>
<dbReference type="EC" id="3.1.1.3" evidence="5"/>
<dbReference type="EMBL" id="U40829">
    <property type="protein sequence ID" value="AAB68285.1"/>
    <property type="molecule type" value="Genomic_DNA"/>
</dbReference>
<dbReference type="EMBL" id="BK006949">
    <property type="protein sequence ID" value="DAA11560.1"/>
    <property type="molecule type" value="Genomic_DNA"/>
</dbReference>
<dbReference type="PIR" id="S69034">
    <property type="entry name" value="S69034"/>
</dbReference>
<dbReference type="RefSeq" id="NP_015473.1">
    <property type="nucleotide sequence ID" value="NM_001184244.1"/>
</dbReference>
<dbReference type="SMR" id="Q06522"/>
<dbReference type="BioGRID" id="36315">
    <property type="interactions" value="18"/>
</dbReference>
<dbReference type="FunCoup" id="Q06522">
    <property type="interactions" value="121"/>
</dbReference>
<dbReference type="IntAct" id="Q06522">
    <property type="interactions" value="1"/>
</dbReference>
<dbReference type="STRING" id="4932.YPR147C"/>
<dbReference type="SwissLipids" id="SLP:000001910"/>
<dbReference type="ESTHER" id="yeast-YPR147C">
    <property type="family name" value="LIDHydrolase"/>
</dbReference>
<dbReference type="GlyGen" id="Q06522">
    <property type="glycosylation" value="1 site"/>
</dbReference>
<dbReference type="PaxDb" id="4932-YPR147C"/>
<dbReference type="PeptideAtlas" id="Q06522"/>
<dbReference type="EnsemblFungi" id="YPR147C_mRNA">
    <property type="protein sequence ID" value="YPR147C"/>
    <property type="gene ID" value="YPR147C"/>
</dbReference>
<dbReference type="GeneID" id="856270"/>
<dbReference type="KEGG" id="sce:YPR147C"/>
<dbReference type="AGR" id="SGD:S000006351"/>
<dbReference type="SGD" id="S000006351">
    <property type="gene designation" value="YPR147C"/>
</dbReference>
<dbReference type="VEuPathDB" id="FungiDB:YPR147C"/>
<dbReference type="eggNOG" id="KOG3975">
    <property type="taxonomic scope" value="Eukaryota"/>
</dbReference>
<dbReference type="GeneTree" id="ENSGT00390000009688"/>
<dbReference type="HOGENOM" id="CLU_018394_1_1_1"/>
<dbReference type="InParanoid" id="Q06522"/>
<dbReference type="OMA" id="LIGYYHT"/>
<dbReference type="OrthoDB" id="448051at2759"/>
<dbReference type="BioCyc" id="YEAST:G3O-34279-MONOMER"/>
<dbReference type="SABIO-RK" id="Q06522"/>
<dbReference type="BioGRID-ORCS" id="856270">
    <property type="hits" value="0 hits in 10 CRISPR screens"/>
</dbReference>
<dbReference type="PRO" id="PR:Q06522"/>
<dbReference type="Proteomes" id="UP000002311">
    <property type="component" value="Chromosome XVI"/>
</dbReference>
<dbReference type="RNAct" id="Q06522">
    <property type="molecule type" value="protein"/>
</dbReference>
<dbReference type="GO" id="GO:0005737">
    <property type="term" value="C:cytoplasm"/>
    <property type="evidence" value="ECO:0007005"/>
    <property type="project" value="SGD"/>
</dbReference>
<dbReference type="GO" id="GO:0005811">
    <property type="term" value="C:lipid droplet"/>
    <property type="evidence" value="ECO:0000314"/>
    <property type="project" value="SGD"/>
</dbReference>
<dbReference type="GO" id="GO:0016020">
    <property type="term" value="C:membrane"/>
    <property type="evidence" value="ECO:0007669"/>
    <property type="project" value="UniProtKB-SubCell"/>
</dbReference>
<dbReference type="GO" id="GO:0016788">
    <property type="term" value="F:hydrolase activity, acting on ester bonds"/>
    <property type="evidence" value="ECO:0000314"/>
    <property type="project" value="SGD"/>
</dbReference>
<dbReference type="GO" id="GO:0004806">
    <property type="term" value="F:triacylglycerol lipase activity"/>
    <property type="evidence" value="ECO:0000314"/>
    <property type="project" value="SGD"/>
</dbReference>
<dbReference type="GO" id="GO:0006629">
    <property type="term" value="P:lipid metabolic process"/>
    <property type="evidence" value="ECO:0000315"/>
    <property type="project" value="SGD"/>
</dbReference>
<dbReference type="GO" id="GO:0019915">
    <property type="term" value="P:lipid storage"/>
    <property type="evidence" value="ECO:0000318"/>
    <property type="project" value="GO_Central"/>
</dbReference>
<dbReference type="GO" id="GO:0019433">
    <property type="term" value="P:triglyceride catabolic process"/>
    <property type="evidence" value="ECO:0000315"/>
    <property type="project" value="SGD"/>
</dbReference>
<dbReference type="FunFam" id="3.40.50.1820:FF:000475">
    <property type="entry name" value="YPR147C-like protein"/>
    <property type="match status" value="1"/>
</dbReference>
<dbReference type="Gene3D" id="3.40.50.1820">
    <property type="entry name" value="alpha/beta hydrolase"/>
    <property type="match status" value="1"/>
</dbReference>
<dbReference type="InterPro" id="IPR029058">
    <property type="entry name" value="AB_hydrolase_fold"/>
</dbReference>
<dbReference type="InterPro" id="IPR019363">
    <property type="entry name" value="LDAH"/>
</dbReference>
<dbReference type="PANTHER" id="PTHR13390">
    <property type="entry name" value="LIPASE"/>
    <property type="match status" value="1"/>
</dbReference>
<dbReference type="PANTHER" id="PTHR13390:SF0">
    <property type="entry name" value="LIPID DROPLET-ASSOCIATED HYDROLASE"/>
    <property type="match status" value="1"/>
</dbReference>
<dbReference type="Pfam" id="PF10230">
    <property type="entry name" value="LIDHydrolase"/>
    <property type="match status" value="1"/>
</dbReference>
<dbReference type="SUPFAM" id="SSF53474">
    <property type="entry name" value="alpha/beta-Hydrolases"/>
    <property type="match status" value="1"/>
</dbReference>
<dbReference type="PROSITE" id="PS00120">
    <property type="entry name" value="LIPASE_SER"/>
    <property type="match status" value="1"/>
</dbReference>
<name>YP147_YEAST</name>
<sequence>MTVKEYTKSKLPCSILNIKPTVTKSGEDAPLLVWIPGNPGLLYYYQEMLHHLHLKHPDWEILGISHAGMTLNAHSNTPIFSLQDQVDHQVEVINNFSCKNRKIIIMGHSVGAYIVQKVCLSNKLVGSVQKVGLVTPTVMDIHTSEMGIKMTAALRYIPPLAHVVSLFSYIFFYWILSEGFSRFIIDKFMGCGSTGYQAVLSTRIFLTHRQFVRQSLGLAAQEMEEITTNWEFQDRFINYCEENGISIWFLFSSNDHWVSGKTRSHLSDYYKDKVKQERLKIDVTDKIPHSFVVKHAEYAINAFF</sequence>
<reference key="1">
    <citation type="journal article" date="1997" name="Nature">
        <title>The nucleotide sequence of Saccharomyces cerevisiae chromosome XVI.</title>
        <authorList>
            <person name="Bussey H."/>
            <person name="Storms R.K."/>
            <person name="Ahmed A."/>
            <person name="Albermann K."/>
            <person name="Allen E."/>
            <person name="Ansorge W."/>
            <person name="Araujo R."/>
            <person name="Aparicio A."/>
            <person name="Barrell B.G."/>
            <person name="Badcock K."/>
            <person name="Benes V."/>
            <person name="Botstein D."/>
            <person name="Bowman S."/>
            <person name="Brueckner M."/>
            <person name="Carpenter J."/>
            <person name="Cherry J.M."/>
            <person name="Chung E."/>
            <person name="Churcher C.M."/>
            <person name="Coster F."/>
            <person name="Davis K."/>
            <person name="Davis R.W."/>
            <person name="Dietrich F.S."/>
            <person name="Delius H."/>
            <person name="DiPaolo T."/>
            <person name="Dubois E."/>
            <person name="Duesterhoeft A."/>
            <person name="Duncan M."/>
            <person name="Floeth M."/>
            <person name="Fortin N."/>
            <person name="Friesen J.D."/>
            <person name="Fritz C."/>
            <person name="Goffeau A."/>
            <person name="Hall J."/>
            <person name="Hebling U."/>
            <person name="Heumann K."/>
            <person name="Hilbert H."/>
            <person name="Hillier L.W."/>
            <person name="Hunicke-Smith S."/>
            <person name="Hyman R.W."/>
            <person name="Johnston M."/>
            <person name="Kalman S."/>
            <person name="Kleine K."/>
            <person name="Komp C."/>
            <person name="Kurdi O."/>
            <person name="Lashkari D."/>
            <person name="Lew H."/>
            <person name="Lin A."/>
            <person name="Lin D."/>
            <person name="Louis E.J."/>
            <person name="Marathe R."/>
            <person name="Messenguy F."/>
            <person name="Mewes H.-W."/>
            <person name="Mirtipati S."/>
            <person name="Moestl D."/>
            <person name="Mueller-Auer S."/>
            <person name="Namath A."/>
            <person name="Nentwich U."/>
            <person name="Oefner P."/>
            <person name="Pearson D."/>
            <person name="Petel F.X."/>
            <person name="Pohl T.M."/>
            <person name="Purnelle B."/>
            <person name="Rajandream M.A."/>
            <person name="Rechmann S."/>
            <person name="Rieger M."/>
            <person name="Riles L."/>
            <person name="Roberts D."/>
            <person name="Schaefer M."/>
            <person name="Scharfe M."/>
            <person name="Scherens B."/>
            <person name="Schramm S."/>
            <person name="Schroeder M."/>
            <person name="Sdicu A.-M."/>
            <person name="Tettelin H."/>
            <person name="Urrestarazu L.A."/>
            <person name="Ushinsky S."/>
            <person name="Vierendeels F."/>
            <person name="Vissers S."/>
            <person name="Voss H."/>
            <person name="Walsh S.V."/>
            <person name="Wambutt R."/>
            <person name="Wang Y."/>
            <person name="Wedler E."/>
            <person name="Wedler H."/>
            <person name="Winnett E."/>
            <person name="Zhong W.-W."/>
            <person name="Zollner A."/>
            <person name="Vo D.H."/>
            <person name="Hani J."/>
        </authorList>
    </citation>
    <scope>NUCLEOTIDE SEQUENCE [LARGE SCALE GENOMIC DNA]</scope>
    <source>
        <strain>ATCC 204508 / S288c</strain>
    </source>
</reference>
<reference key="2">
    <citation type="journal article" date="2014" name="G3 (Bethesda)">
        <title>The reference genome sequence of Saccharomyces cerevisiae: Then and now.</title>
        <authorList>
            <person name="Engel S.R."/>
            <person name="Dietrich F.S."/>
            <person name="Fisk D.G."/>
            <person name="Binkley G."/>
            <person name="Balakrishnan R."/>
            <person name="Costanzo M.C."/>
            <person name="Dwight S.S."/>
            <person name="Hitz B.C."/>
            <person name="Karra K."/>
            <person name="Nash R.S."/>
            <person name="Weng S."/>
            <person name="Wong E.D."/>
            <person name="Lloyd P."/>
            <person name="Skrzypek M.S."/>
            <person name="Miyasato S.R."/>
            <person name="Simison M."/>
            <person name="Cherry J.M."/>
        </authorList>
    </citation>
    <scope>GENOME REANNOTATION</scope>
    <source>
        <strain>ATCC 204508 / S288c</strain>
    </source>
</reference>
<reference key="3">
    <citation type="journal article" date="2003" name="Nature">
        <title>Global analysis of protein expression in yeast.</title>
        <authorList>
            <person name="Ghaemmaghami S."/>
            <person name="Huh W.-K."/>
            <person name="Bower K."/>
            <person name="Howson R.W."/>
            <person name="Belle A."/>
            <person name="Dephoure N."/>
            <person name="O'Shea E.K."/>
            <person name="Weissman J.S."/>
        </authorList>
    </citation>
    <scope>LEVEL OF PROTEIN EXPRESSION [LARGE SCALE ANALYSIS]</scope>
</reference>
<reference key="4">
    <citation type="journal article" date="2014" name="J. Lipid Res.">
        <title>High-confidence proteomic analysis of yeast lipid droplets identifies additional droplet proteins and reveals connections to dolichol synthesis and sterol acetylation.</title>
        <authorList>
            <person name="Currie E."/>
            <person name="Guo X."/>
            <person name="Christiano R."/>
            <person name="Chitraju C."/>
            <person name="Kory N."/>
            <person name="Harrison K."/>
            <person name="Haas J."/>
            <person name="Walther T.C."/>
            <person name="Farese R.V. Jr."/>
        </authorList>
    </citation>
    <scope>SUBCELLULAR LOCATION</scope>
</reference>
<reference key="5">
    <citation type="journal article" date="2018" name="J. Gen. Appl. Microbiol.">
        <title>Saccharomyces cerevisiae lipid droplet associated enzyme Ypr147cp shows both TAG lipase and ester hydrolase activities.</title>
        <authorList>
            <person name="Naresh Kumar M."/>
            <person name="Thunuguntla V.B.S.C."/>
            <person name="Chandra Sekhar B."/>
            <person name="Bondili J.S."/>
        </authorList>
    </citation>
    <scope>FUNCTION</scope>
    <scope>CATALYTIC ACTIVITY</scope>
    <scope>BIOPHYSICOCHEMICAL PROPERTIES</scope>
    <scope>DISRUPTION PHENOTYPE</scope>
</reference>
<protein>
    <recommendedName>
        <fullName evidence="6">Lipid droplet-associated triacylglycerol lipase</fullName>
        <shortName>TAG lipase</shortName>
        <ecNumber evidence="5">3.1.1.3</ecNumber>
    </recommendedName>
</protein>
<gene>
    <name type="ordered locus">YPR147C</name>
</gene>
<accession>Q06522</accession>
<accession>D6W4E4</accession>
<feature type="chain" id="PRO_0000257828" description="Lipid droplet-associated triacylglycerol lipase">
    <location>
        <begin position="1"/>
        <end position="304"/>
    </location>
</feature>
<feature type="topological domain" description="Lumenal" evidence="7">
    <location>
        <begin position="1"/>
        <end position="155"/>
    </location>
</feature>
<feature type="intramembrane region" evidence="1">
    <location>
        <begin position="156"/>
        <end position="176"/>
    </location>
</feature>
<feature type="topological domain" description="Lumenal" evidence="7">
    <location>
        <begin position="177"/>
        <end position="304"/>
    </location>
</feature>
<feature type="short sequence motif" description="GXSXG" evidence="1">
    <location>
        <begin position="107"/>
        <end position="111"/>
    </location>
</feature>
<feature type="active site" description="Nucleophile" evidence="2">
    <location>
        <position position="109"/>
    </location>
</feature>
<feature type="glycosylation site" description="N-linked (GlcNAc...) asparagine" evidence="1">
    <location>
        <position position="95"/>
    </location>
</feature>
<proteinExistence type="evidence at protein level"/>